<accession>B2IQ06</accession>
<organism>
    <name type="scientific">Streptococcus pneumoniae (strain CGSP14)</name>
    <dbReference type="NCBI Taxonomy" id="516950"/>
    <lineage>
        <taxon>Bacteria</taxon>
        <taxon>Bacillati</taxon>
        <taxon>Bacillota</taxon>
        <taxon>Bacilli</taxon>
        <taxon>Lactobacillales</taxon>
        <taxon>Streptococcaceae</taxon>
        <taxon>Streptococcus</taxon>
    </lineage>
</organism>
<sequence length="99" mass="10936">MMNMQNMMRQAQKLQKQMEQSQAELAAMQFVGKSAQDLVQATLTGDKKVVSIDFNPAVVDPEDLETLSDMTVQAINSALEQIDETTKKKLGAFAGKLPF</sequence>
<proteinExistence type="inferred from homology"/>
<keyword id="KW-0963">Cytoplasm</keyword>
<keyword id="KW-0238">DNA-binding</keyword>
<name>Y1178_STRPS</name>
<comment type="function">
    <text evidence="1">Binds to DNA and alters its conformation. May be involved in regulation of gene expression, nucleoid organization and DNA protection.</text>
</comment>
<comment type="subunit">
    <text evidence="1">Homodimer.</text>
</comment>
<comment type="subcellular location">
    <subcellularLocation>
        <location evidence="1">Cytoplasm</location>
        <location evidence="1">Nucleoid</location>
    </subcellularLocation>
</comment>
<comment type="similarity">
    <text evidence="1">Belongs to the YbaB/EbfC family.</text>
</comment>
<feature type="chain" id="PRO_1000114656" description="Nucleoid-associated protein SPCG_1178">
    <location>
        <begin position="1"/>
        <end position="99"/>
    </location>
</feature>
<protein>
    <recommendedName>
        <fullName evidence="1">Nucleoid-associated protein SPCG_1178</fullName>
    </recommendedName>
</protein>
<dbReference type="EMBL" id="CP001033">
    <property type="protein sequence ID" value="ACB90430.1"/>
    <property type="molecule type" value="Genomic_DNA"/>
</dbReference>
<dbReference type="RefSeq" id="WP_000981526.1">
    <property type="nucleotide sequence ID" value="NC_010582.1"/>
</dbReference>
<dbReference type="SMR" id="B2IQ06"/>
<dbReference type="KEGG" id="spw:SPCG_1178"/>
<dbReference type="HOGENOM" id="CLU_140930_1_1_9"/>
<dbReference type="GO" id="GO:0043590">
    <property type="term" value="C:bacterial nucleoid"/>
    <property type="evidence" value="ECO:0007669"/>
    <property type="project" value="UniProtKB-UniRule"/>
</dbReference>
<dbReference type="GO" id="GO:0005829">
    <property type="term" value="C:cytosol"/>
    <property type="evidence" value="ECO:0007669"/>
    <property type="project" value="TreeGrafter"/>
</dbReference>
<dbReference type="GO" id="GO:0003677">
    <property type="term" value="F:DNA binding"/>
    <property type="evidence" value="ECO:0007669"/>
    <property type="project" value="UniProtKB-UniRule"/>
</dbReference>
<dbReference type="FunFam" id="3.30.1310.10:FF:000005">
    <property type="entry name" value="Nucleoid-associated protein SPAR113_1167"/>
    <property type="match status" value="1"/>
</dbReference>
<dbReference type="Gene3D" id="3.30.1310.10">
    <property type="entry name" value="Nucleoid-associated protein YbaB-like domain"/>
    <property type="match status" value="1"/>
</dbReference>
<dbReference type="HAMAP" id="MF_00274">
    <property type="entry name" value="DNA_YbaB_EbfC"/>
    <property type="match status" value="1"/>
</dbReference>
<dbReference type="InterPro" id="IPR036894">
    <property type="entry name" value="YbaB-like_sf"/>
</dbReference>
<dbReference type="InterPro" id="IPR004401">
    <property type="entry name" value="YbaB/EbfC"/>
</dbReference>
<dbReference type="NCBIfam" id="TIGR00103">
    <property type="entry name" value="DNA_YbaB_EbfC"/>
    <property type="match status" value="1"/>
</dbReference>
<dbReference type="PANTHER" id="PTHR33449">
    <property type="entry name" value="NUCLEOID-ASSOCIATED PROTEIN YBAB"/>
    <property type="match status" value="1"/>
</dbReference>
<dbReference type="PANTHER" id="PTHR33449:SF1">
    <property type="entry name" value="NUCLEOID-ASSOCIATED PROTEIN YBAB"/>
    <property type="match status" value="1"/>
</dbReference>
<dbReference type="Pfam" id="PF02575">
    <property type="entry name" value="YbaB_DNA_bd"/>
    <property type="match status" value="1"/>
</dbReference>
<dbReference type="PIRSF" id="PIRSF004555">
    <property type="entry name" value="UCP004555"/>
    <property type="match status" value="1"/>
</dbReference>
<dbReference type="SUPFAM" id="SSF82607">
    <property type="entry name" value="YbaB-like"/>
    <property type="match status" value="1"/>
</dbReference>
<gene>
    <name type="ordered locus">SPCG_1178</name>
</gene>
<evidence type="ECO:0000255" key="1">
    <source>
        <dbReference type="HAMAP-Rule" id="MF_00274"/>
    </source>
</evidence>
<reference key="1">
    <citation type="journal article" date="2009" name="BMC Genomics">
        <title>Genome evolution driven by host adaptations results in a more virulent and antimicrobial-resistant Streptococcus pneumoniae serotype 14.</title>
        <authorList>
            <person name="Ding F."/>
            <person name="Tang P."/>
            <person name="Hsu M.-H."/>
            <person name="Cui P."/>
            <person name="Hu S."/>
            <person name="Yu J."/>
            <person name="Chiu C.-H."/>
        </authorList>
    </citation>
    <scope>NUCLEOTIDE SEQUENCE [LARGE SCALE GENOMIC DNA]</scope>
    <source>
        <strain>CGSP14</strain>
    </source>
</reference>